<comment type="function">
    <text evidence="1">DNA-dependent RNA polymerase catalyzes the transcription of DNA into RNA using the four ribonucleoside triphosphates as substrates.</text>
</comment>
<comment type="catalytic activity">
    <reaction evidence="1">
        <text>RNA(n) + a ribonucleoside 5'-triphosphate = RNA(n+1) + diphosphate</text>
        <dbReference type="Rhea" id="RHEA:21248"/>
        <dbReference type="Rhea" id="RHEA-COMP:14527"/>
        <dbReference type="Rhea" id="RHEA-COMP:17342"/>
        <dbReference type="ChEBI" id="CHEBI:33019"/>
        <dbReference type="ChEBI" id="CHEBI:61557"/>
        <dbReference type="ChEBI" id="CHEBI:140395"/>
        <dbReference type="EC" id="2.7.7.6"/>
    </reaction>
</comment>
<comment type="subunit">
    <text evidence="1">Homodimer. The RNAP catalytic core consists of 2 alpha, 1 beta, 1 beta' and 1 omega subunit. When a sigma factor is associated with the core the holoenzyme is formed, which can initiate transcription.</text>
</comment>
<comment type="domain">
    <text evidence="1">The N-terminal domain is essential for RNAP assembly and basal transcription, whereas the C-terminal domain is involved in interaction with transcriptional regulators and with upstream promoter elements.</text>
</comment>
<comment type="similarity">
    <text evidence="1">Belongs to the RNA polymerase alpha chain family.</text>
</comment>
<sequence>MIEFQKPTIRCEELSPDNKYGRYVIEPLERGYGITVGNALRRTLLSSLPGAAVTAVKIDGVLHEFSTIPGVLEDVPEIILNLKGLAIKMSSPGPKVMYIEAQGECEVKAKDIKADADIEICNPDHHIATLNQDARLFMEITVNQGKGYVLAERNKQPNQPIGVIPVDSIYTPVVKVNYKVENTRVGQVTDYDKLTMEIWTNGTIRPDEALTVAAKILIEHFNLFTDLSNIPTKIETVVKQEPPKRNKLLDMTIEELELSVRSYNCLKRAGINTVEDLVNKTEEEMMKVRNLGKKSLEEVIQKLHSLGLSLKKSDSTPKEEEEEK</sequence>
<evidence type="ECO:0000255" key="1">
    <source>
        <dbReference type="HAMAP-Rule" id="MF_00059"/>
    </source>
</evidence>
<organism>
    <name type="scientific">Caldicellulosiruptor bescii (strain ATCC BAA-1888 / DSM 6725 / KCTC 15123 / Z-1320)</name>
    <name type="common">Anaerocellum thermophilum</name>
    <dbReference type="NCBI Taxonomy" id="521460"/>
    <lineage>
        <taxon>Bacteria</taxon>
        <taxon>Bacillati</taxon>
        <taxon>Bacillota</taxon>
        <taxon>Bacillota incertae sedis</taxon>
        <taxon>Caldicellulosiruptorales</taxon>
        <taxon>Caldicellulosiruptoraceae</taxon>
        <taxon>Caldicellulosiruptor</taxon>
    </lineage>
</organism>
<protein>
    <recommendedName>
        <fullName evidence="1">DNA-directed RNA polymerase subunit alpha</fullName>
        <shortName evidence="1">RNAP subunit alpha</shortName>
        <ecNumber evidence="1">2.7.7.6</ecNumber>
    </recommendedName>
    <alternativeName>
        <fullName evidence="1">RNA polymerase subunit alpha</fullName>
    </alternativeName>
    <alternativeName>
        <fullName evidence="1">Transcriptase subunit alpha</fullName>
    </alternativeName>
</protein>
<keyword id="KW-0240">DNA-directed RNA polymerase</keyword>
<keyword id="KW-0548">Nucleotidyltransferase</keyword>
<keyword id="KW-0804">Transcription</keyword>
<keyword id="KW-0808">Transferase</keyword>
<proteinExistence type="inferred from homology"/>
<dbReference type="EC" id="2.7.7.6" evidence="1"/>
<dbReference type="EMBL" id="CP001393">
    <property type="protein sequence ID" value="ACM60811.1"/>
    <property type="molecule type" value="Genomic_DNA"/>
</dbReference>
<dbReference type="RefSeq" id="WP_015908137.1">
    <property type="nucleotide sequence ID" value="NC_012034.1"/>
</dbReference>
<dbReference type="SMR" id="B9MKF3"/>
<dbReference type="STRING" id="521460.Athe_1717"/>
<dbReference type="GeneID" id="31773074"/>
<dbReference type="KEGG" id="ate:Athe_1717"/>
<dbReference type="eggNOG" id="COG0202">
    <property type="taxonomic scope" value="Bacteria"/>
</dbReference>
<dbReference type="HOGENOM" id="CLU_053084_0_1_9"/>
<dbReference type="Proteomes" id="UP000007723">
    <property type="component" value="Chromosome"/>
</dbReference>
<dbReference type="GO" id="GO:0005737">
    <property type="term" value="C:cytoplasm"/>
    <property type="evidence" value="ECO:0007669"/>
    <property type="project" value="UniProtKB-ARBA"/>
</dbReference>
<dbReference type="GO" id="GO:0000428">
    <property type="term" value="C:DNA-directed RNA polymerase complex"/>
    <property type="evidence" value="ECO:0007669"/>
    <property type="project" value="UniProtKB-KW"/>
</dbReference>
<dbReference type="GO" id="GO:0003677">
    <property type="term" value="F:DNA binding"/>
    <property type="evidence" value="ECO:0007669"/>
    <property type="project" value="UniProtKB-UniRule"/>
</dbReference>
<dbReference type="GO" id="GO:0003899">
    <property type="term" value="F:DNA-directed RNA polymerase activity"/>
    <property type="evidence" value="ECO:0007669"/>
    <property type="project" value="UniProtKB-UniRule"/>
</dbReference>
<dbReference type="GO" id="GO:0046983">
    <property type="term" value="F:protein dimerization activity"/>
    <property type="evidence" value="ECO:0007669"/>
    <property type="project" value="InterPro"/>
</dbReference>
<dbReference type="GO" id="GO:0006351">
    <property type="term" value="P:DNA-templated transcription"/>
    <property type="evidence" value="ECO:0007669"/>
    <property type="project" value="UniProtKB-UniRule"/>
</dbReference>
<dbReference type="CDD" id="cd06928">
    <property type="entry name" value="RNAP_alpha_NTD"/>
    <property type="match status" value="1"/>
</dbReference>
<dbReference type="FunFam" id="1.10.150.20:FF:000001">
    <property type="entry name" value="DNA-directed RNA polymerase subunit alpha"/>
    <property type="match status" value="1"/>
</dbReference>
<dbReference type="FunFam" id="2.170.120.12:FF:000001">
    <property type="entry name" value="DNA-directed RNA polymerase subunit alpha"/>
    <property type="match status" value="1"/>
</dbReference>
<dbReference type="Gene3D" id="1.10.150.20">
    <property type="entry name" value="5' to 3' exonuclease, C-terminal subdomain"/>
    <property type="match status" value="1"/>
</dbReference>
<dbReference type="Gene3D" id="2.170.120.12">
    <property type="entry name" value="DNA-directed RNA polymerase, insert domain"/>
    <property type="match status" value="1"/>
</dbReference>
<dbReference type="Gene3D" id="3.30.1360.10">
    <property type="entry name" value="RNA polymerase, RBP11-like subunit"/>
    <property type="match status" value="1"/>
</dbReference>
<dbReference type="HAMAP" id="MF_00059">
    <property type="entry name" value="RNApol_bact_RpoA"/>
    <property type="match status" value="1"/>
</dbReference>
<dbReference type="InterPro" id="IPR011262">
    <property type="entry name" value="DNA-dir_RNA_pol_insert"/>
</dbReference>
<dbReference type="InterPro" id="IPR011263">
    <property type="entry name" value="DNA-dir_RNA_pol_RpoA/D/Rpb3"/>
</dbReference>
<dbReference type="InterPro" id="IPR011773">
    <property type="entry name" value="DNA-dir_RpoA"/>
</dbReference>
<dbReference type="InterPro" id="IPR036603">
    <property type="entry name" value="RBP11-like"/>
</dbReference>
<dbReference type="InterPro" id="IPR011260">
    <property type="entry name" value="RNAP_asu_C"/>
</dbReference>
<dbReference type="InterPro" id="IPR036643">
    <property type="entry name" value="RNApol_insert_sf"/>
</dbReference>
<dbReference type="NCBIfam" id="NF003513">
    <property type="entry name" value="PRK05182.1-2"/>
    <property type="match status" value="1"/>
</dbReference>
<dbReference type="NCBIfam" id="NF003515">
    <property type="entry name" value="PRK05182.2-1"/>
    <property type="match status" value="1"/>
</dbReference>
<dbReference type="NCBIfam" id="NF003516">
    <property type="entry name" value="PRK05182.2-2"/>
    <property type="match status" value="1"/>
</dbReference>
<dbReference type="NCBIfam" id="NF003519">
    <property type="entry name" value="PRK05182.2-5"/>
    <property type="match status" value="1"/>
</dbReference>
<dbReference type="NCBIfam" id="TIGR02027">
    <property type="entry name" value="rpoA"/>
    <property type="match status" value="1"/>
</dbReference>
<dbReference type="Pfam" id="PF01000">
    <property type="entry name" value="RNA_pol_A_bac"/>
    <property type="match status" value="1"/>
</dbReference>
<dbReference type="Pfam" id="PF03118">
    <property type="entry name" value="RNA_pol_A_CTD"/>
    <property type="match status" value="1"/>
</dbReference>
<dbReference type="Pfam" id="PF01193">
    <property type="entry name" value="RNA_pol_L"/>
    <property type="match status" value="1"/>
</dbReference>
<dbReference type="SMART" id="SM00662">
    <property type="entry name" value="RPOLD"/>
    <property type="match status" value="1"/>
</dbReference>
<dbReference type="SUPFAM" id="SSF47789">
    <property type="entry name" value="C-terminal domain of RNA polymerase alpha subunit"/>
    <property type="match status" value="1"/>
</dbReference>
<dbReference type="SUPFAM" id="SSF56553">
    <property type="entry name" value="Insert subdomain of RNA polymerase alpha subunit"/>
    <property type="match status" value="1"/>
</dbReference>
<dbReference type="SUPFAM" id="SSF55257">
    <property type="entry name" value="RBP11-like subunits of RNA polymerase"/>
    <property type="match status" value="1"/>
</dbReference>
<reference key="1">
    <citation type="submission" date="2009-01" db="EMBL/GenBank/DDBJ databases">
        <title>Complete sequence of chromosome of Caldicellulosiruptor becscii DSM 6725.</title>
        <authorList>
            <person name="Lucas S."/>
            <person name="Copeland A."/>
            <person name="Lapidus A."/>
            <person name="Glavina del Rio T."/>
            <person name="Tice H."/>
            <person name="Bruce D."/>
            <person name="Goodwin L."/>
            <person name="Pitluck S."/>
            <person name="Sims D."/>
            <person name="Meincke L."/>
            <person name="Brettin T."/>
            <person name="Detter J.C."/>
            <person name="Han C."/>
            <person name="Larimer F."/>
            <person name="Land M."/>
            <person name="Hauser L."/>
            <person name="Kyrpides N."/>
            <person name="Ovchinnikova G."/>
            <person name="Kataeva I."/>
            <person name="Adams M.W.W."/>
        </authorList>
    </citation>
    <scope>NUCLEOTIDE SEQUENCE [LARGE SCALE GENOMIC DNA]</scope>
    <source>
        <strain>ATCC BAA-1888 / DSM 6725 / KCTC 15123 / Z-1320</strain>
    </source>
</reference>
<accession>B9MKF3</accession>
<feature type="chain" id="PRO_1000196623" description="DNA-directed RNA polymerase subunit alpha">
    <location>
        <begin position="1"/>
        <end position="324"/>
    </location>
</feature>
<feature type="region of interest" description="Alpha N-terminal domain (alpha-NTD)" evidence="1">
    <location>
        <begin position="1"/>
        <end position="228"/>
    </location>
</feature>
<feature type="region of interest" description="Alpha C-terminal domain (alpha-CTD)" evidence="1">
    <location>
        <begin position="245"/>
        <end position="324"/>
    </location>
</feature>
<name>RPOA_CALBD</name>
<gene>
    <name evidence="1" type="primary">rpoA</name>
    <name type="ordered locus">Athe_1717</name>
</gene>